<accession>C3N5S5</accession>
<comment type="function">
    <text evidence="1">Catalyzes the attachment of isoleucine to tRNA(Ile). As IleRS can inadvertently accommodate and process structurally similar amino acids such as valine, to avoid such errors it has two additional distinct tRNA(Ile)-dependent editing activities. One activity is designated as 'pretransfer' editing and involves the hydrolysis of activated Val-AMP. The other activity is designated 'posttransfer' editing and involves deacylation of mischarged Val-tRNA(Ile).</text>
</comment>
<comment type="catalytic activity">
    <reaction evidence="1">
        <text>tRNA(Ile) + L-isoleucine + ATP = L-isoleucyl-tRNA(Ile) + AMP + diphosphate</text>
        <dbReference type="Rhea" id="RHEA:11060"/>
        <dbReference type="Rhea" id="RHEA-COMP:9666"/>
        <dbReference type="Rhea" id="RHEA-COMP:9695"/>
        <dbReference type="ChEBI" id="CHEBI:30616"/>
        <dbReference type="ChEBI" id="CHEBI:33019"/>
        <dbReference type="ChEBI" id="CHEBI:58045"/>
        <dbReference type="ChEBI" id="CHEBI:78442"/>
        <dbReference type="ChEBI" id="CHEBI:78528"/>
        <dbReference type="ChEBI" id="CHEBI:456215"/>
        <dbReference type="EC" id="6.1.1.5"/>
    </reaction>
</comment>
<comment type="cofactor">
    <cofactor evidence="1">
        <name>Zn(2+)</name>
        <dbReference type="ChEBI" id="CHEBI:29105"/>
    </cofactor>
</comment>
<comment type="subunit">
    <text evidence="1">Monomer.</text>
</comment>
<comment type="subcellular location">
    <subcellularLocation>
        <location evidence="1">Cytoplasm</location>
    </subcellularLocation>
</comment>
<comment type="domain">
    <text evidence="1">IleRS has two distinct active sites: one for aminoacylation and one for editing. The misactivated valine is translocated from the active site to the editing site, which sterically excludes the correctly activated isoleucine. The single editing site contains two valyl binding pockets, one specific for each substrate (Val-AMP or Val-tRNA(Ile)).</text>
</comment>
<comment type="similarity">
    <text evidence="1">Belongs to the class-I aminoacyl-tRNA synthetase family. IleS type 2 subfamily.</text>
</comment>
<proteinExistence type="inferred from homology"/>
<evidence type="ECO:0000255" key="1">
    <source>
        <dbReference type="HAMAP-Rule" id="MF_02003"/>
    </source>
</evidence>
<dbReference type="EC" id="6.1.1.5" evidence="1"/>
<dbReference type="EMBL" id="CP001401">
    <property type="protein sequence ID" value="ACP55350.1"/>
    <property type="molecule type" value="Genomic_DNA"/>
</dbReference>
<dbReference type="SMR" id="C3N5S5"/>
<dbReference type="KEGG" id="sim:M1627_1468"/>
<dbReference type="HOGENOM" id="CLU_001493_1_1_2"/>
<dbReference type="Proteomes" id="UP000002307">
    <property type="component" value="Chromosome"/>
</dbReference>
<dbReference type="GO" id="GO:0005829">
    <property type="term" value="C:cytosol"/>
    <property type="evidence" value="ECO:0007669"/>
    <property type="project" value="TreeGrafter"/>
</dbReference>
<dbReference type="GO" id="GO:0002161">
    <property type="term" value="F:aminoacyl-tRNA deacylase activity"/>
    <property type="evidence" value="ECO:0007669"/>
    <property type="project" value="InterPro"/>
</dbReference>
<dbReference type="GO" id="GO:0005524">
    <property type="term" value="F:ATP binding"/>
    <property type="evidence" value="ECO:0007669"/>
    <property type="project" value="UniProtKB-UniRule"/>
</dbReference>
<dbReference type="GO" id="GO:0004822">
    <property type="term" value="F:isoleucine-tRNA ligase activity"/>
    <property type="evidence" value="ECO:0007669"/>
    <property type="project" value="UniProtKB-UniRule"/>
</dbReference>
<dbReference type="GO" id="GO:0000049">
    <property type="term" value="F:tRNA binding"/>
    <property type="evidence" value="ECO:0007669"/>
    <property type="project" value="InterPro"/>
</dbReference>
<dbReference type="GO" id="GO:0008270">
    <property type="term" value="F:zinc ion binding"/>
    <property type="evidence" value="ECO:0007669"/>
    <property type="project" value="UniProtKB-UniRule"/>
</dbReference>
<dbReference type="GO" id="GO:0006428">
    <property type="term" value="P:isoleucyl-tRNA aminoacylation"/>
    <property type="evidence" value="ECO:0007669"/>
    <property type="project" value="UniProtKB-UniRule"/>
</dbReference>
<dbReference type="CDD" id="cd07961">
    <property type="entry name" value="Anticodon_Ia_Ile_ABEc"/>
    <property type="match status" value="1"/>
</dbReference>
<dbReference type="CDD" id="cd00818">
    <property type="entry name" value="IleRS_core"/>
    <property type="match status" value="1"/>
</dbReference>
<dbReference type="FunFam" id="1.10.730.10:FF:000083">
    <property type="entry name" value="Isoleucine--tRNA ligase"/>
    <property type="match status" value="1"/>
</dbReference>
<dbReference type="FunFam" id="3.40.50.620:FF:000325">
    <property type="entry name" value="Isoleucine--tRNA ligase"/>
    <property type="match status" value="1"/>
</dbReference>
<dbReference type="FunFam" id="3.90.740.10:FF:000041">
    <property type="entry name" value="Isoleucine--tRNA ligase"/>
    <property type="match status" value="1"/>
</dbReference>
<dbReference type="Gene3D" id="3.40.50.620">
    <property type="entry name" value="HUPs"/>
    <property type="match status" value="2"/>
</dbReference>
<dbReference type="Gene3D" id="1.10.730.10">
    <property type="entry name" value="Isoleucyl-tRNA Synthetase, Domain 1"/>
    <property type="match status" value="1"/>
</dbReference>
<dbReference type="Gene3D" id="3.90.740.10">
    <property type="entry name" value="Valyl/Leucyl/Isoleucyl-tRNA synthetase, editing domain"/>
    <property type="match status" value="1"/>
</dbReference>
<dbReference type="HAMAP" id="MF_02003">
    <property type="entry name" value="Ile_tRNA_synth_type2"/>
    <property type="match status" value="1"/>
</dbReference>
<dbReference type="InterPro" id="IPR001412">
    <property type="entry name" value="aa-tRNA-synth_I_CS"/>
</dbReference>
<dbReference type="InterPro" id="IPR002300">
    <property type="entry name" value="aa-tRNA-synth_Ia"/>
</dbReference>
<dbReference type="InterPro" id="IPR033709">
    <property type="entry name" value="Anticodon_Ile_ABEc"/>
</dbReference>
<dbReference type="InterPro" id="IPR002301">
    <property type="entry name" value="Ile-tRNA-ligase"/>
</dbReference>
<dbReference type="InterPro" id="IPR023586">
    <property type="entry name" value="Ile-tRNA-ligase_type2"/>
</dbReference>
<dbReference type="InterPro" id="IPR050081">
    <property type="entry name" value="Ile-tRNA_ligase"/>
</dbReference>
<dbReference type="InterPro" id="IPR013155">
    <property type="entry name" value="M/V/L/I-tRNA-synth_anticd-bd"/>
</dbReference>
<dbReference type="InterPro" id="IPR014729">
    <property type="entry name" value="Rossmann-like_a/b/a_fold"/>
</dbReference>
<dbReference type="InterPro" id="IPR009080">
    <property type="entry name" value="tRNAsynth_Ia_anticodon-bd"/>
</dbReference>
<dbReference type="InterPro" id="IPR009008">
    <property type="entry name" value="Val/Leu/Ile-tRNA-synth_edit"/>
</dbReference>
<dbReference type="NCBIfam" id="TIGR00392">
    <property type="entry name" value="ileS"/>
    <property type="match status" value="1"/>
</dbReference>
<dbReference type="PANTHER" id="PTHR42765:SF1">
    <property type="entry name" value="ISOLEUCINE--TRNA LIGASE, MITOCHONDRIAL"/>
    <property type="match status" value="1"/>
</dbReference>
<dbReference type="PANTHER" id="PTHR42765">
    <property type="entry name" value="SOLEUCYL-TRNA SYNTHETASE"/>
    <property type="match status" value="1"/>
</dbReference>
<dbReference type="Pfam" id="PF08264">
    <property type="entry name" value="Anticodon_1"/>
    <property type="match status" value="1"/>
</dbReference>
<dbReference type="Pfam" id="PF19302">
    <property type="entry name" value="DUF5915"/>
    <property type="match status" value="1"/>
</dbReference>
<dbReference type="Pfam" id="PF00133">
    <property type="entry name" value="tRNA-synt_1"/>
    <property type="match status" value="1"/>
</dbReference>
<dbReference type="PRINTS" id="PR00984">
    <property type="entry name" value="TRNASYNTHILE"/>
</dbReference>
<dbReference type="SUPFAM" id="SSF47323">
    <property type="entry name" value="Anticodon-binding domain of a subclass of class I aminoacyl-tRNA synthetases"/>
    <property type="match status" value="2"/>
</dbReference>
<dbReference type="SUPFAM" id="SSF52374">
    <property type="entry name" value="Nucleotidylyl transferase"/>
    <property type="match status" value="1"/>
</dbReference>
<dbReference type="SUPFAM" id="SSF50677">
    <property type="entry name" value="ValRS/IleRS/LeuRS editing domain"/>
    <property type="match status" value="1"/>
</dbReference>
<dbReference type="PROSITE" id="PS00178">
    <property type="entry name" value="AA_TRNA_LIGASE_I"/>
    <property type="match status" value="1"/>
</dbReference>
<gene>
    <name evidence="1" type="primary">ileS</name>
    <name type="ordered locus">M1627_1468</name>
</gene>
<name>SYI_SACI3</name>
<organism>
    <name type="scientific">Saccharolobus islandicus (strain M.16.27)</name>
    <name type="common">Sulfolobus islandicus</name>
    <dbReference type="NCBI Taxonomy" id="427318"/>
    <lineage>
        <taxon>Archaea</taxon>
        <taxon>Thermoproteota</taxon>
        <taxon>Thermoprotei</taxon>
        <taxon>Sulfolobales</taxon>
        <taxon>Sulfolobaceae</taxon>
        <taxon>Saccharolobus</taxon>
    </lineage>
</organism>
<sequence length="1049" mass="121984">MKPLTGNYDPKKIEDEIISFWEENKIYNKLRDIVSKRREKFLFIDGPPYPSSPTPHIGTIWNKVIKDCILRYERLLGKKVHDQPGYDTHGLPIEVATERLLGILNKQEIIDKIGVENFINKCKEFALSNATKMTQNFKDVGVFMDWERPYYTLDPSYISSSWSVIKKAYEKGMLDKGTAVLHWCPRCETTLSDYEVSEYRDLEDPSIYVKFKIKGEENRYLLIWTTTPWTIPSNVFVMVNKDYDYADVEVNGEVLVLAKDRIEAVMKEASITNYKVLRTYKGSELIGVKYKHPLRDFVSAQTKLDDFHQVVDAGNVVTLTDGTGLVHAATGHGEEDFLIGQKYGFPVVMFVNDRGEFTEEGGKYKGLKVRDASKVIINDLKSKNALFFEGKIVHRYPVCWRCKTPLVLRAIDQWFIRVTKIKDEMLKEIENVNWIPDWGKSRISNMVKELRDWVISRQRFWGTPLPIWICEKCNNVIVVGSREDLESIAIDSVPNDLHRPWIDNVRVKCNKCGGVAKRIADVADVWFDSGVAFFASLGKDWQEKWKELGPVDLVLEGHDQLRGWFFSLLRSGLILLDKAPYVSVLVHGFMLDEQGREMHKSLGNYVEPSVVIQRYGRDILRLWLLRNTTWEDARFSWRALELTKRDLQIIWNTYVFASMYMNLDNFEPVKYTLDDVIKYAKIEDLWILSRFNSMLKKVNESMKNYKVHEMANYLINFLVEDVSRFYIRLIRKRAWIEANTQDKIAMYYILYFILKQWIILASTIIPFISEKIYKSFVVNPKESVSMESSINYDERFIDNELERAFEVAREINEASLNARAKAGIKLRWPLAKVYIFVEDEDTLAKVNRIKDVLLSLLNAKDIEISKIEGFKSFSKYKVEPNRSIIGKEYKSMSPKILDYIRNNSDIIAIDILNKKQHVARIDNVDVILNTSHVIISEETIEGYVSSKFAQGIVVISKEISESEEEEGLVRDIIRRIQFMRKQLKLNVVDYIEISIKAPEERVKTIQKWEEFIKSETRGNKVILGDPKGDIVMDWDIEGESYIIGIKKST</sequence>
<keyword id="KW-0030">Aminoacyl-tRNA synthetase</keyword>
<keyword id="KW-0067">ATP-binding</keyword>
<keyword id="KW-0963">Cytoplasm</keyword>
<keyword id="KW-0436">Ligase</keyword>
<keyword id="KW-0479">Metal-binding</keyword>
<keyword id="KW-0547">Nucleotide-binding</keyword>
<keyword id="KW-0648">Protein biosynthesis</keyword>
<keyword id="KW-0862">Zinc</keyword>
<reference key="1">
    <citation type="journal article" date="2009" name="Proc. Natl. Acad. Sci. U.S.A.">
        <title>Biogeography of the Sulfolobus islandicus pan-genome.</title>
        <authorList>
            <person name="Reno M.L."/>
            <person name="Held N.L."/>
            <person name="Fields C.J."/>
            <person name="Burke P.V."/>
            <person name="Whitaker R.J."/>
        </authorList>
    </citation>
    <scope>NUCLEOTIDE SEQUENCE [LARGE SCALE GENOMIC DNA]</scope>
    <source>
        <strain>M.16.27</strain>
    </source>
</reference>
<protein>
    <recommendedName>
        <fullName evidence="1">Isoleucine--tRNA ligase</fullName>
        <ecNumber evidence="1">6.1.1.5</ecNumber>
    </recommendedName>
    <alternativeName>
        <fullName evidence="1">Isoleucyl-tRNA synthetase</fullName>
        <shortName evidence="1">IleRS</shortName>
    </alternativeName>
</protein>
<feature type="chain" id="PRO_1000216258" description="Isoleucine--tRNA ligase">
    <location>
        <begin position="1"/>
        <end position="1049"/>
    </location>
</feature>
<feature type="short sequence motif" description="'HIGH' region">
    <location>
        <begin position="48"/>
        <end position="59"/>
    </location>
</feature>
<feature type="short sequence motif" description="'KMSKS' region">
    <location>
        <begin position="597"/>
        <end position="601"/>
    </location>
</feature>
<feature type="binding site" evidence="1">
    <location>
        <position position="600"/>
    </location>
    <ligand>
        <name>ATP</name>
        <dbReference type="ChEBI" id="CHEBI:30616"/>
    </ligand>
</feature>